<evidence type="ECO:0000250" key="1">
    <source>
        <dbReference type="UniProtKB" id="P21741"/>
    </source>
</evidence>
<evidence type="ECO:0000250" key="2">
    <source>
        <dbReference type="UniProtKB" id="P48530"/>
    </source>
</evidence>
<evidence type="ECO:0000255" key="3"/>
<evidence type="ECO:0000312" key="4">
    <source>
        <dbReference type="EMBL" id="AAH61275.1"/>
    </source>
</evidence>
<evidence type="ECO:0000312" key="5">
    <source>
        <dbReference type="Xenbase" id="XB-GENE-488502"/>
    </source>
</evidence>
<comment type="function">
    <text evidence="1 2">Secreted protein that functions as a cytokine and growth factor and mediates its signal through cell-surface proteoglycan and non-proteoglycan receptors. Binds cell-surface proteoglycan receptors via their chondroitin sulfate (CS) groups. Thereby regulates many processes like inflammatory response, cell proliferation, cell adhesion, cell growth, cell survival, tissue regeneration, cell differentiation and cell migration (By similarity). Inhibits mesoderm formation and promotes neural formation during development. Plays a role in development of the neuromuscular junction (NMJ). Has antibacterial activity against both Gram-positive and Gram-negative bacteria (By similarity).</text>
</comment>
<comment type="subcellular location">
    <subcellularLocation>
        <location evidence="1">Secreted</location>
    </subcellularLocation>
</comment>
<comment type="similarity">
    <text evidence="3">Belongs to the pleiotrophin family.</text>
</comment>
<proteinExistence type="evidence at transcript level"/>
<gene>
    <name evidence="5" type="primary">mdk</name>
</gene>
<accession>Q6P8F3</accession>
<reference evidence="4" key="1">
    <citation type="submission" date="2003-11" db="EMBL/GenBank/DDBJ databases">
        <authorList>
            <consortium name="NIH - Xenopus Gene Collection (XGC) project"/>
        </authorList>
    </citation>
    <scope>NUCLEOTIDE SEQUENCE [LARGE SCALE MRNA]</scope>
    <source>
        <tissue evidence="4">Tadpole</tissue>
    </source>
</reference>
<name>MK_XENTR</name>
<dbReference type="EMBL" id="BC061275">
    <property type="protein sequence ID" value="AAH61275.1"/>
    <property type="molecule type" value="mRNA"/>
</dbReference>
<dbReference type="RefSeq" id="NP_989074.1">
    <property type="nucleotide sequence ID" value="NM_203743.1"/>
</dbReference>
<dbReference type="SMR" id="Q6P8F3"/>
<dbReference type="FunCoup" id="Q6P8F3">
    <property type="interactions" value="222"/>
</dbReference>
<dbReference type="STRING" id="8364.ENSXETP00000010258"/>
<dbReference type="PaxDb" id="8364-ENSXETP00000004204"/>
<dbReference type="DNASU" id="394671"/>
<dbReference type="GeneID" id="394671"/>
<dbReference type="KEGG" id="xtr:394671"/>
<dbReference type="AGR" id="Xenbase:XB-GENE-488502"/>
<dbReference type="CTD" id="4192"/>
<dbReference type="Xenbase" id="XB-GENE-488502">
    <property type="gene designation" value="mdk"/>
</dbReference>
<dbReference type="eggNOG" id="ENOG502S022">
    <property type="taxonomic scope" value="Eukaryota"/>
</dbReference>
<dbReference type="HOGENOM" id="CLU_136864_0_0_1"/>
<dbReference type="InParanoid" id="Q6P8F3"/>
<dbReference type="OMA" id="AECQTTV"/>
<dbReference type="OrthoDB" id="8818336at2759"/>
<dbReference type="PhylomeDB" id="Q6P8F3"/>
<dbReference type="TreeFam" id="TF332376"/>
<dbReference type="Reactome" id="R-XTR-2979096">
    <property type="pathway name" value="NOTCH2 Activation and Transmission of Signal to the Nucleus"/>
</dbReference>
<dbReference type="Proteomes" id="UP000008143">
    <property type="component" value="Chromosome 4"/>
</dbReference>
<dbReference type="Bgee" id="ENSXETG00000001967">
    <property type="expression patterns" value="Expressed in neurula embryo and 12 other cell types or tissues"/>
</dbReference>
<dbReference type="GO" id="GO:0005576">
    <property type="term" value="C:extracellular region"/>
    <property type="evidence" value="ECO:0007669"/>
    <property type="project" value="UniProtKB-SubCell"/>
</dbReference>
<dbReference type="GO" id="GO:0008083">
    <property type="term" value="F:growth factor activity"/>
    <property type="evidence" value="ECO:0007669"/>
    <property type="project" value="UniProtKB-KW"/>
</dbReference>
<dbReference type="GO" id="GO:0043395">
    <property type="term" value="F:heparan sulfate proteoglycan binding"/>
    <property type="evidence" value="ECO:0000250"/>
    <property type="project" value="UniProtKB"/>
</dbReference>
<dbReference type="GO" id="GO:0008201">
    <property type="term" value="F:heparin binding"/>
    <property type="evidence" value="ECO:0000250"/>
    <property type="project" value="UniProtKB"/>
</dbReference>
<dbReference type="GO" id="GO:0030154">
    <property type="term" value="P:cell differentiation"/>
    <property type="evidence" value="ECO:0007669"/>
    <property type="project" value="UniProtKB-KW"/>
</dbReference>
<dbReference type="GO" id="GO:0042742">
    <property type="term" value="P:defense response to bacterium"/>
    <property type="evidence" value="ECO:0007669"/>
    <property type="project" value="UniProtKB-KW"/>
</dbReference>
<dbReference type="GO" id="GO:0007399">
    <property type="term" value="P:nervous system development"/>
    <property type="evidence" value="ECO:0000250"/>
    <property type="project" value="UniProtKB"/>
</dbReference>
<dbReference type="GO" id="GO:0007528">
    <property type="term" value="P:neuromuscular junction development"/>
    <property type="evidence" value="ECO:0000250"/>
    <property type="project" value="UniProtKB"/>
</dbReference>
<dbReference type="GO" id="GO:0051781">
    <property type="term" value="P:positive regulation of cell division"/>
    <property type="evidence" value="ECO:0007669"/>
    <property type="project" value="UniProtKB-KW"/>
</dbReference>
<dbReference type="GO" id="GO:0009617">
    <property type="term" value="P:response to bacterium"/>
    <property type="evidence" value="ECO:0000250"/>
    <property type="project" value="UniProtKB"/>
</dbReference>
<dbReference type="FunFam" id="2.20.60.10:FF:000002">
    <property type="entry name" value="Midkine a"/>
    <property type="match status" value="1"/>
</dbReference>
<dbReference type="FunFam" id="2.30.90.10:FF:000001">
    <property type="entry name" value="Pleiotrophin"/>
    <property type="match status" value="1"/>
</dbReference>
<dbReference type="Gene3D" id="2.30.90.10">
    <property type="entry name" value="Heparin-binding Growth Factor, Midkine, Chain A- C-terminal Domain"/>
    <property type="match status" value="1"/>
</dbReference>
<dbReference type="Gene3D" id="2.20.60.10">
    <property type="entry name" value="Pleiotrophin/Midkine, N-terminal domain"/>
    <property type="match status" value="1"/>
</dbReference>
<dbReference type="InterPro" id="IPR000762">
    <property type="entry name" value="Midkine_heparin-bd_GF"/>
</dbReference>
<dbReference type="InterPro" id="IPR020090">
    <property type="entry name" value="PTN/MK_C_dom"/>
</dbReference>
<dbReference type="InterPro" id="IPR038130">
    <property type="entry name" value="PTN/MK_C_dom_sf"/>
</dbReference>
<dbReference type="InterPro" id="IPR020091">
    <property type="entry name" value="PTN/MK_diS_sf"/>
</dbReference>
<dbReference type="InterPro" id="IPR020089">
    <property type="entry name" value="PTN/MK_N_dom"/>
</dbReference>
<dbReference type="InterPro" id="IPR037122">
    <property type="entry name" value="PTN/MK_N_dom_sf"/>
</dbReference>
<dbReference type="InterPro" id="IPR020092">
    <property type="entry name" value="PTN_MK_heparin-bd_GF_CS"/>
</dbReference>
<dbReference type="PANTHER" id="PTHR13850:SF2">
    <property type="entry name" value="MIDKINE"/>
    <property type="match status" value="1"/>
</dbReference>
<dbReference type="PANTHER" id="PTHR13850">
    <property type="entry name" value="PLEIOTROPHIN FAMILY MEMBER"/>
    <property type="match status" value="1"/>
</dbReference>
<dbReference type="Pfam" id="PF01091">
    <property type="entry name" value="PTN_MK_C"/>
    <property type="match status" value="1"/>
</dbReference>
<dbReference type="Pfam" id="PF05196">
    <property type="entry name" value="PTN_MK_N"/>
    <property type="match status" value="1"/>
</dbReference>
<dbReference type="PRINTS" id="PR00269">
    <property type="entry name" value="PTNMIDKINE"/>
</dbReference>
<dbReference type="SMART" id="SM00193">
    <property type="entry name" value="PTN"/>
    <property type="match status" value="1"/>
</dbReference>
<dbReference type="SUPFAM" id="SSF57288">
    <property type="entry name" value="Midkine"/>
    <property type="match status" value="2"/>
</dbReference>
<dbReference type="PROSITE" id="PS00619">
    <property type="entry name" value="PTN_MK_1"/>
    <property type="match status" value="1"/>
</dbReference>
<dbReference type="PROSITE" id="PS00620">
    <property type="entry name" value="PTN_MK_2"/>
    <property type="match status" value="1"/>
</dbReference>
<organism>
    <name type="scientific">Xenopus tropicalis</name>
    <name type="common">Western clawed frog</name>
    <name type="synonym">Silurana tropicalis</name>
    <dbReference type="NCBI Taxonomy" id="8364"/>
    <lineage>
        <taxon>Eukaryota</taxon>
        <taxon>Metazoa</taxon>
        <taxon>Chordata</taxon>
        <taxon>Craniata</taxon>
        <taxon>Vertebrata</taxon>
        <taxon>Euteleostomi</taxon>
        <taxon>Amphibia</taxon>
        <taxon>Batrachia</taxon>
        <taxon>Anura</taxon>
        <taxon>Pipoidea</taxon>
        <taxon>Pipidae</taxon>
        <taxon>Xenopodinae</taxon>
        <taxon>Xenopus</taxon>
        <taxon>Silurana</taxon>
    </lineage>
</organism>
<sequence length="142" mass="15684">MELRAFCVILLITFLAVSSQAAKNKKEKGKKGASDCTEWTWGRCIPNSKDCGAGTREGTCKEETRKLKCKIPCNWKKAFGADCKYKFENWGECNATTGQKVRSGTLKKALYNADCQQTVEATKPCSLKTKSKSKGKKGKGKE</sequence>
<protein>
    <recommendedName>
        <fullName evidence="1 2 4">Midkine</fullName>
        <shortName evidence="1 2">MK</shortName>
    </recommendedName>
</protein>
<feature type="signal peptide" evidence="3">
    <location>
        <begin position="1"/>
        <end position="21"/>
    </location>
</feature>
<feature type="chain" id="PRO_0000398805" description="Midkine" evidence="3">
    <location>
        <begin position="22"/>
        <end position="142"/>
    </location>
</feature>
<feature type="disulfide bond" evidence="1">
    <location>
        <begin position="36"/>
        <end position="60"/>
    </location>
</feature>
<feature type="disulfide bond" evidence="1">
    <location>
        <begin position="44"/>
        <end position="69"/>
    </location>
</feature>
<feature type="disulfide bond" evidence="1">
    <location>
        <begin position="51"/>
        <end position="73"/>
    </location>
</feature>
<feature type="disulfide bond" evidence="1">
    <location>
        <begin position="83"/>
        <end position="115"/>
    </location>
</feature>
<feature type="disulfide bond" evidence="1">
    <location>
        <begin position="93"/>
        <end position="125"/>
    </location>
</feature>
<keyword id="KW-0044">Antibiotic</keyword>
<keyword id="KW-0929">Antimicrobial</keyword>
<keyword id="KW-0217">Developmental protein</keyword>
<keyword id="KW-0221">Differentiation</keyword>
<keyword id="KW-1015">Disulfide bond</keyword>
<keyword id="KW-0339">Growth factor</keyword>
<keyword id="KW-0358">Heparin-binding</keyword>
<keyword id="KW-0497">Mitogen</keyword>
<keyword id="KW-1185">Reference proteome</keyword>
<keyword id="KW-0964">Secreted</keyword>
<keyword id="KW-0732">Signal</keyword>